<feature type="chain" id="PRO_0000070269" description="Macoilin">
    <location>
        <begin position="1"/>
        <end position="664"/>
    </location>
</feature>
<feature type="transmembrane region" description="Helical" evidence="4">
    <location>
        <begin position="28"/>
        <end position="48"/>
    </location>
</feature>
<feature type="transmembrane region" description="Helical" evidence="4">
    <location>
        <begin position="75"/>
        <end position="95"/>
    </location>
</feature>
<feature type="transmembrane region" description="Helical" evidence="4">
    <location>
        <begin position="120"/>
        <end position="140"/>
    </location>
</feature>
<feature type="transmembrane region" description="Helical" evidence="4">
    <location>
        <begin position="154"/>
        <end position="174"/>
    </location>
</feature>
<feature type="region of interest" description="Disordered" evidence="5">
    <location>
        <begin position="253"/>
        <end position="274"/>
    </location>
</feature>
<feature type="region of interest" description="Disordered" evidence="5">
    <location>
        <begin position="320"/>
        <end position="375"/>
    </location>
</feature>
<feature type="region of interest" description="Disordered" evidence="5">
    <location>
        <begin position="630"/>
        <end position="664"/>
    </location>
</feature>
<feature type="compositionally biased region" description="Basic and acidic residues" evidence="5">
    <location>
        <begin position="253"/>
        <end position="265"/>
    </location>
</feature>
<feature type="compositionally biased region" description="Polar residues" evidence="5">
    <location>
        <begin position="320"/>
        <end position="348"/>
    </location>
</feature>
<feature type="modified residue" description="Phosphoserine" evidence="3">
    <location>
        <position position="305"/>
    </location>
</feature>
<feature type="modified residue" description="Phosphoserine" evidence="3">
    <location>
        <position position="332"/>
    </location>
</feature>
<feature type="modified residue" description="Phosphoserine" evidence="3">
    <location>
        <position position="631"/>
    </location>
</feature>
<feature type="modified residue" description="Phosphoserine" evidence="3">
    <location>
        <position position="634"/>
    </location>
</feature>
<feature type="glycosylation site" description="N-linked (GlcNAc...) asparagine" evidence="4">
    <location>
        <position position="324"/>
    </location>
</feature>
<feature type="glycosylation site" description="N-linked (GlcNAc...) asparagine" evidence="4">
    <location>
        <position position="340"/>
    </location>
</feature>
<feature type="glycosylation site" description="N-linked (GlcNAc...) asparagine" evidence="4">
    <location>
        <position position="452"/>
    </location>
</feature>
<feature type="glycosylation site" description="N-linked (GlcNAc...) asparagine" evidence="4">
    <location>
        <position position="655"/>
    </location>
</feature>
<feature type="splice variant" id="VSP_017207" description="In isoform 2." evidence="6">
    <location>
        <begin position="27"/>
        <end position="384"/>
    </location>
</feature>
<protein>
    <recommendedName>
        <fullName>Macoilin</fullName>
    </recommendedName>
    <alternativeName>
        <fullName>Transmembrane protein 57</fullName>
    </alternativeName>
</protein>
<proteinExistence type="evidence at transcript level"/>
<keyword id="KW-0025">Alternative splicing</keyword>
<keyword id="KW-0256">Endoplasmic reticulum</keyword>
<keyword id="KW-0325">Glycoprotein</keyword>
<keyword id="KW-0472">Membrane</keyword>
<keyword id="KW-0539">Nucleus</keyword>
<keyword id="KW-0597">Phosphoprotein</keyword>
<keyword id="KW-1185">Reference proteome</keyword>
<keyword id="KW-0812">Transmembrane</keyword>
<keyword id="KW-1133">Transmembrane helix</keyword>
<accession>Q2TLZ5</accession>
<accession>Q2TLX4</accession>
<evidence type="ECO:0000250" key="1">
    <source>
        <dbReference type="UniProtKB" id="P91193"/>
    </source>
</evidence>
<evidence type="ECO:0000250" key="2">
    <source>
        <dbReference type="UniProtKB" id="Q7TQE6"/>
    </source>
</evidence>
<evidence type="ECO:0000250" key="3">
    <source>
        <dbReference type="UniProtKB" id="Q8N5G2"/>
    </source>
</evidence>
<evidence type="ECO:0000255" key="4"/>
<evidence type="ECO:0000256" key="5">
    <source>
        <dbReference type="SAM" id="MobiDB-lite"/>
    </source>
</evidence>
<evidence type="ECO:0000303" key="6">
    <source ref="1"/>
</evidence>
<evidence type="ECO:0000305" key="7"/>
<reference key="1">
    <citation type="submission" date="2004-12" db="EMBL/GenBank/DDBJ databases">
        <title>Identification of macoilin as a novel membrane-associated coiled-coil tetraspanin protein.</title>
        <authorList>
            <person name="Huang C.-H."/>
            <person name="Peng J."/>
            <person name="Ye T."/>
            <person name="Chen Y."/>
        </authorList>
    </citation>
    <scope>NUCLEOTIDE SEQUENCE [MRNA] (ISOFORMS 1 AND 2)</scope>
</reference>
<organism>
    <name type="scientific">Pan troglodytes</name>
    <name type="common">Chimpanzee</name>
    <dbReference type="NCBI Taxonomy" id="9598"/>
    <lineage>
        <taxon>Eukaryota</taxon>
        <taxon>Metazoa</taxon>
        <taxon>Chordata</taxon>
        <taxon>Craniata</taxon>
        <taxon>Vertebrata</taxon>
        <taxon>Euteleostomi</taxon>
        <taxon>Mammalia</taxon>
        <taxon>Eutheria</taxon>
        <taxon>Euarchontoglires</taxon>
        <taxon>Primates</taxon>
        <taxon>Haplorrhini</taxon>
        <taxon>Catarrhini</taxon>
        <taxon>Hominidae</taxon>
        <taxon>Pan</taxon>
    </lineage>
</organism>
<comment type="function">
    <text evidence="3">Plays a role in the regulation of neuronal activity.</text>
</comment>
<comment type="subcellular location">
    <subcellularLocation>
        <location evidence="1">Rough endoplasmic reticulum membrane</location>
        <topology evidence="4">Multi-pass membrane protein</topology>
    </subcellularLocation>
    <subcellularLocation>
        <location evidence="1">Nucleus membrane</location>
        <topology evidence="4">Multi-pass membrane protein</topology>
    </subcellularLocation>
    <text evidence="2">Detected in the nucleus membrane of non-neuronal cells and in axonal outgrowths of neuronal cells.</text>
</comment>
<comment type="alternative products">
    <event type="alternative splicing"/>
    <isoform>
        <id>Q2TLZ5-1</id>
        <name>1</name>
        <sequence type="displayed"/>
    </isoform>
    <isoform>
        <id>Q2TLZ5-2</id>
        <name>2</name>
        <sequence type="described" ref="VSP_017207"/>
    </isoform>
</comment>
<comment type="similarity">
    <text evidence="7">Belongs to the macoilin family.</text>
</comment>
<name>MACOI_PANTR</name>
<dbReference type="EMBL" id="AY845016">
    <property type="protein sequence ID" value="AAX11914.1"/>
    <property type="molecule type" value="mRNA"/>
</dbReference>
<dbReference type="EMBL" id="AY845037">
    <property type="protein sequence ID" value="AAX11935.1"/>
    <property type="molecule type" value="mRNA"/>
</dbReference>
<dbReference type="RefSeq" id="NP_001033738.1">
    <molecule id="Q2TLZ5-1"/>
    <property type="nucleotide sequence ID" value="NM_001038649.1"/>
</dbReference>
<dbReference type="SMR" id="Q2TLZ5"/>
<dbReference type="STRING" id="9598.ENSPTRP00000049985"/>
<dbReference type="GlyCosmos" id="Q2TLZ5">
    <property type="glycosylation" value="4 sites, No reported glycans"/>
</dbReference>
<dbReference type="PaxDb" id="9598-ENSPTRP00000049985"/>
<dbReference type="GeneID" id="456502"/>
<dbReference type="CTD" id="55219"/>
<dbReference type="eggNOG" id="KOG1821">
    <property type="taxonomic scope" value="Eukaryota"/>
</dbReference>
<dbReference type="HOGENOM" id="CLU_051352_0_0_1"/>
<dbReference type="InParanoid" id="Q2TLZ5"/>
<dbReference type="OrthoDB" id="10915at9604"/>
<dbReference type="Proteomes" id="UP000002277">
    <property type="component" value="Unplaced"/>
</dbReference>
<dbReference type="GO" id="GO:0031965">
    <property type="term" value="C:nuclear membrane"/>
    <property type="evidence" value="ECO:0007669"/>
    <property type="project" value="UniProtKB-SubCell"/>
</dbReference>
<dbReference type="GO" id="GO:0030867">
    <property type="term" value="C:rough endoplasmic reticulum membrane"/>
    <property type="evidence" value="ECO:0000250"/>
    <property type="project" value="UniProtKB"/>
</dbReference>
<dbReference type="GO" id="GO:0023041">
    <property type="term" value="P:neuronal signal transduction"/>
    <property type="evidence" value="ECO:0000250"/>
    <property type="project" value="UniProtKB"/>
</dbReference>
<dbReference type="InterPro" id="IPR019130">
    <property type="entry name" value="Macoilin"/>
</dbReference>
<dbReference type="PANTHER" id="PTHR47464">
    <property type="entry name" value="MACOILIN"/>
    <property type="match status" value="1"/>
</dbReference>
<dbReference type="PANTHER" id="PTHR47464:SF2">
    <property type="entry name" value="MACOILIN"/>
    <property type="match status" value="1"/>
</dbReference>
<dbReference type="Pfam" id="PF09726">
    <property type="entry name" value="Macoilin"/>
    <property type="match status" value="1"/>
</dbReference>
<sequence>MKRRNADCSKLRRPLKRNRITEGIYGSTFLYLKFLVVWALVLLADFVVEFRFEYLWPFWLFIRSVYDSFRYQGLAFSVFFVCVAFTSNIICLLFIPIQWLFFAASTYVWVQYVWHTERGVCLPTVSLWILFVYIEAAIRFKDLKNFHVDLCRPFAAHCIGYPVVTLGFGFKSYVSYKMRLRKQKEVQKENEFYMQLLQQALPPEQQMLQKQEKEAEEAAKGLPDMDSSILIHHNGGIPANKKLSTTLPEIEYREKGKEKDKDAKKHNLGINNNNILQPVDSKIQEIEYMENHINSKRLNNDLVGSTENLLKEDSCTASSKNYKNASGVVNSSPRSHSATNGSIPSSSSKNEKKQKCTSKSPSTHKDLMENCIPNNQLSKPDALVRLEQDIKKLKADLQASRQVEQELRSQISSLSSTERGIRSEMGQLRQENELLQNKLHNAVQMKQKDKQNISQLEKKLKAEQEARSFVEKQLMEEKKRKKLEEATAARAVAFAAASRGECTETLRNRIRELEAEGKKLTMDMKVKEDQIRELELKVQELRKYKENEKDTEVLMSALSAMQDKTQHLENSLSAETRIKLDLFSALGDAKRQLEIAQGQILQKDQEIKDLKQKIAEVMAVMPSITYSAATSPLSPVSPHYSSKFVETSPSGLDPNASVYQPLKK</sequence>
<gene>
    <name type="primary">MACO1</name>
    <name type="synonym">TMEM57</name>
</gene>